<accession>Q5WSX8</accession>
<feature type="initiator methionine" description="Removed" evidence="1">
    <location>
        <position position="1"/>
    </location>
</feature>
<feature type="chain" id="PRO_0000135347" description="Glutamine--fructose-6-phosphate aminotransferase [isomerizing]">
    <location>
        <begin position="2"/>
        <end position="604"/>
    </location>
</feature>
<feature type="domain" description="Glutamine amidotransferase type-2" evidence="1">
    <location>
        <begin position="2"/>
        <end position="219"/>
    </location>
</feature>
<feature type="domain" description="SIS 1" evidence="1">
    <location>
        <begin position="279"/>
        <end position="427"/>
    </location>
</feature>
<feature type="domain" description="SIS 2" evidence="1">
    <location>
        <begin position="454"/>
        <end position="594"/>
    </location>
</feature>
<feature type="active site" description="Nucleophile; for GATase activity" evidence="1">
    <location>
        <position position="2"/>
    </location>
</feature>
<feature type="active site" description="For Fru-6P isomerization activity" evidence="1">
    <location>
        <position position="599"/>
    </location>
</feature>
<sequence>MCGIMGAVSERDISKVLLEGLRRLEYRGYDSAGIAVIDSQDRLKRVRIQGKVQNLADAMQETAIAGNTGIAHTRWATHGKPSEQNAHPHLSHGEIALVHNGIIENHEHLRQQLITYGYQFTSETDTEVAAHLIHYHYQQHENLLLAVQKSAAEMQGAFALGVIHQKRPEELVAIRKGSPLVLGFGIGENFIASDALALRSFAQSVIYMEEGDSACVTTQDIKVYDSNRILVQRATHPLNSDSEIVNKGPYRHFMLKEIFEQSKVITDTLESRINSIDVLRASFGEKASHIFPMVKNIHIVACGTSYHAGMIAKYWLESLAGLPTQVEIASEYRYRDVVVPDNTLFITVSQSGETADTLAALFKAKQSNYLASLAICNVATSTLVREADCVFLTRAGIEIGVASTKAFTTQLAAFLMLAAALCKDNRAQEVLRQLQELPACCERVLQMNEEVESLASLFVNKVHALFLGRGVQYPVALEGALKLKEISYIHAEAYPAGELKHGPLALVDKDMPVIAVAPNDELLDKLKSNLHEVSARGGQLFVFVDDSQNWKANGARLIKVPSCGAWLAPIIYTIPLQLLAYHVAVAKGTDVDQPRNLAKSVTVE</sequence>
<evidence type="ECO:0000255" key="1">
    <source>
        <dbReference type="HAMAP-Rule" id="MF_00164"/>
    </source>
</evidence>
<reference key="1">
    <citation type="journal article" date="2004" name="Nat. Genet.">
        <title>Evidence in the Legionella pneumophila genome for exploitation of host cell functions and high genome plasticity.</title>
        <authorList>
            <person name="Cazalet C."/>
            <person name="Rusniok C."/>
            <person name="Brueggemann H."/>
            <person name="Zidane N."/>
            <person name="Magnier A."/>
            <person name="Ma L."/>
            <person name="Tichit M."/>
            <person name="Jarraud S."/>
            <person name="Bouchier C."/>
            <person name="Vandenesch F."/>
            <person name="Kunst F."/>
            <person name="Etienne J."/>
            <person name="Glaser P."/>
            <person name="Buchrieser C."/>
        </authorList>
    </citation>
    <scope>NUCLEOTIDE SEQUENCE [LARGE SCALE GENOMIC DNA]</scope>
    <source>
        <strain>Lens</strain>
    </source>
</reference>
<proteinExistence type="inferred from homology"/>
<name>GLMS_LEGPL</name>
<keyword id="KW-0032">Aminotransferase</keyword>
<keyword id="KW-0963">Cytoplasm</keyword>
<keyword id="KW-0315">Glutamine amidotransferase</keyword>
<keyword id="KW-0677">Repeat</keyword>
<keyword id="KW-0808">Transferase</keyword>
<comment type="function">
    <text evidence="1">Catalyzes the first step in hexosamine metabolism, converting fructose-6P into glucosamine-6P using glutamine as a nitrogen source.</text>
</comment>
<comment type="catalytic activity">
    <reaction evidence="1">
        <text>D-fructose 6-phosphate + L-glutamine = D-glucosamine 6-phosphate + L-glutamate</text>
        <dbReference type="Rhea" id="RHEA:13237"/>
        <dbReference type="ChEBI" id="CHEBI:29985"/>
        <dbReference type="ChEBI" id="CHEBI:58359"/>
        <dbReference type="ChEBI" id="CHEBI:58725"/>
        <dbReference type="ChEBI" id="CHEBI:61527"/>
        <dbReference type="EC" id="2.6.1.16"/>
    </reaction>
</comment>
<comment type="subunit">
    <text evidence="1">Homodimer.</text>
</comment>
<comment type="subcellular location">
    <subcellularLocation>
        <location evidence="1">Cytoplasm</location>
    </subcellularLocation>
</comment>
<gene>
    <name evidence="1" type="primary">glmS</name>
    <name type="ordered locus">lpl2748</name>
</gene>
<protein>
    <recommendedName>
        <fullName evidence="1">Glutamine--fructose-6-phosphate aminotransferase [isomerizing]</fullName>
        <ecNumber evidence="1">2.6.1.16</ecNumber>
    </recommendedName>
    <alternativeName>
        <fullName evidence="1">D-fructose-6-phosphate amidotransferase</fullName>
    </alternativeName>
    <alternativeName>
        <fullName evidence="1">GFAT</fullName>
    </alternativeName>
    <alternativeName>
        <fullName evidence="1">Glucosamine-6-phosphate synthase</fullName>
    </alternativeName>
    <alternativeName>
        <fullName evidence="1">Hexosephosphate aminotransferase</fullName>
    </alternativeName>
    <alternativeName>
        <fullName evidence="1">L-glutamine--D-fructose-6-phosphate amidotransferase</fullName>
    </alternativeName>
</protein>
<organism>
    <name type="scientific">Legionella pneumophila (strain Lens)</name>
    <dbReference type="NCBI Taxonomy" id="297245"/>
    <lineage>
        <taxon>Bacteria</taxon>
        <taxon>Pseudomonadati</taxon>
        <taxon>Pseudomonadota</taxon>
        <taxon>Gammaproteobacteria</taxon>
        <taxon>Legionellales</taxon>
        <taxon>Legionellaceae</taxon>
        <taxon>Legionella</taxon>
    </lineage>
</organism>
<dbReference type="EC" id="2.6.1.16" evidence="1"/>
<dbReference type="EMBL" id="CR628337">
    <property type="protein sequence ID" value="CAH16991.1"/>
    <property type="molecule type" value="Genomic_DNA"/>
</dbReference>
<dbReference type="RefSeq" id="WP_011216671.1">
    <property type="nucleotide sequence ID" value="NC_006369.1"/>
</dbReference>
<dbReference type="SMR" id="Q5WSX8"/>
<dbReference type="KEGG" id="lpf:lpl2748"/>
<dbReference type="LegioList" id="lpl2748"/>
<dbReference type="HOGENOM" id="CLU_012520_5_2_6"/>
<dbReference type="Proteomes" id="UP000002517">
    <property type="component" value="Chromosome"/>
</dbReference>
<dbReference type="GO" id="GO:0005829">
    <property type="term" value="C:cytosol"/>
    <property type="evidence" value="ECO:0007669"/>
    <property type="project" value="TreeGrafter"/>
</dbReference>
<dbReference type="GO" id="GO:0097367">
    <property type="term" value="F:carbohydrate derivative binding"/>
    <property type="evidence" value="ECO:0007669"/>
    <property type="project" value="InterPro"/>
</dbReference>
<dbReference type="GO" id="GO:0004360">
    <property type="term" value="F:glutamine-fructose-6-phosphate transaminase (isomerizing) activity"/>
    <property type="evidence" value="ECO:0007669"/>
    <property type="project" value="UniProtKB-UniRule"/>
</dbReference>
<dbReference type="GO" id="GO:0005975">
    <property type="term" value="P:carbohydrate metabolic process"/>
    <property type="evidence" value="ECO:0007669"/>
    <property type="project" value="UniProtKB-UniRule"/>
</dbReference>
<dbReference type="GO" id="GO:0006002">
    <property type="term" value="P:fructose 6-phosphate metabolic process"/>
    <property type="evidence" value="ECO:0007669"/>
    <property type="project" value="TreeGrafter"/>
</dbReference>
<dbReference type="GO" id="GO:0006487">
    <property type="term" value="P:protein N-linked glycosylation"/>
    <property type="evidence" value="ECO:0007669"/>
    <property type="project" value="TreeGrafter"/>
</dbReference>
<dbReference type="GO" id="GO:0006047">
    <property type="term" value="P:UDP-N-acetylglucosamine metabolic process"/>
    <property type="evidence" value="ECO:0007669"/>
    <property type="project" value="TreeGrafter"/>
</dbReference>
<dbReference type="CDD" id="cd00714">
    <property type="entry name" value="GFAT"/>
    <property type="match status" value="1"/>
</dbReference>
<dbReference type="CDD" id="cd05008">
    <property type="entry name" value="SIS_GlmS_GlmD_1"/>
    <property type="match status" value="1"/>
</dbReference>
<dbReference type="CDD" id="cd05009">
    <property type="entry name" value="SIS_GlmS_GlmD_2"/>
    <property type="match status" value="1"/>
</dbReference>
<dbReference type="FunFam" id="3.40.50.10490:FF:000001">
    <property type="entry name" value="Glutamine--fructose-6-phosphate aminotransferase [isomerizing]"/>
    <property type="match status" value="1"/>
</dbReference>
<dbReference type="FunFam" id="3.60.20.10:FF:000006">
    <property type="entry name" value="Glutamine--fructose-6-phosphate aminotransferase [isomerizing]"/>
    <property type="match status" value="1"/>
</dbReference>
<dbReference type="Gene3D" id="3.40.50.10490">
    <property type="entry name" value="Glucose-6-phosphate isomerase like protein, domain 1"/>
    <property type="match status" value="2"/>
</dbReference>
<dbReference type="Gene3D" id="3.60.20.10">
    <property type="entry name" value="Glutamine Phosphoribosylpyrophosphate, subunit 1, domain 1"/>
    <property type="match status" value="1"/>
</dbReference>
<dbReference type="HAMAP" id="MF_00164">
    <property type="entry name" value="GlmS"/>
    <property type="match status" value="1"/>
</dbReference>
<dbReference type="InterPro" id="IPR017932">
    <property type="entry name" value="GATase_2_dom"/>
</dbReference>
<dbReference type="InterPro" id="IPR005855">
    <property type="entry name" value="GFAT"/>
</dbReference>
<dbReference type="InterPro" id="IPR047084">
    <property type="entry name" value="GFAT_N"/>
</dbReference>
<dbReference type="InterPro" id="IPR035466">
    <property type="entry name" value="GlmS/AgaS_SIS"/>
</dbReference>
<dbReference type="InterPro" id="IPR035490">
    <property type="entry name" value="GlmS/FrlB_SIS"/>
</dbReference>
<dbReference type="InterPro" id="IPR029055">
    <property type="entry name" value="Ntn_hydrolases_N"/>
</dbReference>
<dbReference type="InterPro" id="IPR001347">
    <property type="entry name" value="SIS_dom"/>
</dbReference>
<dbReference type="InterPro" id="IPR046348">
    <property type="entry name" value="SIS_dom_sf"/>
</dbReference>
<dbReference type="NCBIfam" id="TIGR01135">
    <property type="entry name" value="glmS"/>
    <property type="match status" value="1"/>
</dbReference>
<dbReference type="NCBIfam" id="NF001484">
    <property type="entry name" value="PRK00331.1"/>
    <property type="match status" value="1"/>
</dbReference>
<dbReference type="PANTHER" id="PTHR10937">
    <property type="entry name" value="GLUCOSAMINE--FRUCTOSE-6-PHOSPHATE AMINOTRANSFERASE, ISOMERIZING"/>
    <property type="match status" value="1"/>
</dbReference>
<dbReference type="PANTHER" id="PTHR10937:SF0">
    <property type="entry name" value="GLUTAMINE--FRUCTOSE-6-PHOSPHATE TRANSAMINASE (ISOMERIZING)"/>
    <property type="match status" value="1"/>
</dbReference>
<dbReference type="Pfam" id="PF13522">
    <property type="entry name" value="GATase_6"/>
    <property type="match status" value="1"/>
</dbReference>
<dbReference type="Pfam" id="PF01380">
    <property type="entry name" value="SIS"/>
    <property type="match status" value="2"/>
</dbReference>
<dbReference type="SUPFAM" id="SSF56235">
    <property type="entry name" value="N-terminal nucleophile aminohydrolases (Ntn hydrolases)"/>
    <property type="match status" value="1"/>
</dbReference>
<dbReference type="SUPFAM" id="SSF53697">
    <property type="entry name" value="SIS domain"/>
    <property type="match status" value="1"/>
</dbReference>
<dbReference type="PROSITE" id="PS51278">
    <property type="entry name" value="GATASE_TYPE_2"/>
    <property type="match status" value="1"/>
</dbReference>
<dbReference type="PROSITE" id="PS51464">
    <property type="entry name" value="SIS"/>
    <property type="match status" value="2"/>
</dbReference>